<gene>
    <name evidence="1" type="primary">ackA</name>
    <name type="ordered locus">APJL_0636</name>
</gene>
<sequence length="402" mass="43555">MSKNLILILNCGSSSLKFAVLDPKTGDEKLSGLAEAFNLEDARIKWKLHGEKGNADLGAGAAHSEALTFIANELLSEELKSSIGAIGHRIVHGGEQFTSSVVINDDVVKGIEHAIQFAPLHNPAHLIGIKEAFRIFPELKEKNVAVFDTAFHQTMPEEAFLYALPYKLYKEHGIRRYGAHGTSHLFITSQVAELAGKPVDQTNAIICHLGNGGSVSVVRNGKCIDTSMGLTPLEGLVMGTRSGDIDPAIVFYLYKNLGMSMEQIEDTLVKKSGLLGLTEVTSDCRYAEDNYEDASKPEAKRALDVYSYRLAKYIGAYMAILGDDHLDAIAFTGGIGENSGHVRELALNHLKLFGVKLDVERNLAARFGKSGVITADDSTFKAVVIPTNEELVIAQDTAKLAL</sequence>
<dbReference type="EC" id="2.7.2.1" evidence="1"/>
<dbReference type="EMBL" id="CP000687">
    <property type="protein sequence ID" value="ABY69206.1"/>
    <property type="molecule type" value="Genomic_DNA"/>
</dbReference>
<dbReference type="RefSeq" id="WP_005596931.1">
    <property type="nucleotide sequence ID" value="NC_010278.1"/>
</dbReference>
<dbReference type="SMR" id="B0BNS1"/>
<dbReference type="KEGG" id="apj:APJL_0636"/>
<dbReference type="HOGENOM" id="CLU_020352_0_1_6"/>
<dbReference type="UniPathway" id="UPA00340">
    <property type="reaction ID" value="UER00458"/>
</dbReference>
<dbReference type="Proteomes" id="UP000008547">
    <property type="component" value="Chromosome"/>
</dbReference>
<dbReference type="GO" id="GO:0005829">
    <property type="term" value="C:cytosol"/>
    <property type="evidence" value="ECO:0007669"/>
    <property type="project" value="TreeGrafter"/>
</dbReference>
<dbReference type="GO" id="GO:0008776">
    <property type="term" value="F:acetate kinase activity"/>
    <property type="evidence" value="ECO:0007669"/>
    <property type="project" value="UniProtKB-UniRule"/>
</dbReference>
<dbReference type="GO" id="GO:0005524">
    <property type="term" value="F:ATP binding"/>
    <property type="evidence" value="ECO:0007669"/>
    <property type="project" value="UniProtKB-KW"/>
</dbReference>
<dbReference type="GO" id="GO:0000287">
    <property type="term" value="F:magnesium ion binding"/>
    <property type="evidence" value="ECO:0007669"/>
    <property type="project" value="UniProtKB-UniRule"/>
</dbReference>
<dbReference type="GO" id="GO:0006083">
    <property type="term" value="P:acetate metabolic process"/>
    <property type="evidence" value="ECO:0007669"/>
    <property type="project" value="TreeGrafter"/>
</dbReference>
<dbReference type="GO" id="GO:0006085">
    <property type="term" value="P:acetyl-CoA biosynthetic process"/>
    <property type="evidence" value="ECO:0007669"/>
    <property type="project" value="UniProtKB-UniRule"/>
</dbReference>
<dbReference type="CDD" id="cd24010">
    <property type="entry name" value="ASKHA_NBD_AcK_PK"/>
    <property type="match status" value="1"/>
</dbReference>
<dbReference type="FunFam" id="3.30.420.40:FF:000041">
    <property type="entry name" value="Acetate kinase"/>
    <property type="match status" value="1"/>
</dbReference>
<dbReference type="FunFam" id="3.30.420.40:FF:000042">
    <property type="entry name" value="Acetate kinase"/>
    <property type="match status" value="1"/>
</dbReference>
<dbReference type="Gene3D" id="3.30.420.40">
    <property type="match status" value="2"/>
</dbReference>
<dbReference type="HAMAP" id="MF_00020">
    <property type="entry name" value="Acetate_kinase"/>
    <property type="match status" value="1"/>
</dbReference>
<dbReference type="InterPro" id="IPR004372">
    <property type="entry name" value="Ac/propionate_kinase"/>
</dbReference>
<dbReference type="InterPro" id="IPR000890">
    <property type="entry name" value="Aliphatic_acid_kin_short-chain"/>
</dbReference>
<dbReference type="InterPro" id="IPR023865">
    <property type="entry name" value="Aliphatic_acid_kinase_CS"/>
</dbReference>
<dbReference type="InterPro" id="IPR043129">
    <property type="entry name" value="ATPase_NBD"/>
</dbReference>
<dbReference type="NCBIfam" id="TIGR00016">
    <property type="entry name" value="ackA"/>
    <property type="match status" value="1"/>
</dbReference>
<dbReference type="PANTHER" id="PTHR21060">
    <property type="entry name" value="ACETATE KINASE"/>
    <property type="match status" value="1"/>
</dbReference>
<dbReference type="PANTHER" id="PTHR21060:SF21">
    <property type="entry name" value="ACETATE KINASE"/>
    <property type="match status" value="1"/>
</dbReference>
<dbReference type="Pfam" id="PF00871">
    <property type="entry name" value="Acetate_kinase"/>
    <property type="match status" value="1"/>
</dbReference>
<dbReference type="PIRSF" id="PIRSF000722">
    <property type="entry name" value="Acetate_prop_kin"/>
    <property type="match status" value="1"/>
</dbReference>
<dbReference type="PRINTS" id="PR00471">
    <property type="entry name" value="ACETATEKNASE"/>
</dbReference>
<dbReference type="SUPFAM" id="SSF53067">
    <property type="entry name" value="Actin-like ATPase domain"/>
    <property type="match status" value="2"/>
</dbReference>
<dbReference type="PROSITE" id="PS01075">
    <property type="entry name" value="ACETATE_KINASE_1"/>
    <property type="match status" value="1"/>
</dbReference>
<dbReference type="PROSITE" id="PS01076">
    <property type="entry name" value="ACETATE_KINASE_2"/>
    <property type="match status" value="1"/>
</dbReference>
<feature type="chain" id="PRO_1000089957" description="Acetate kinase">
    <location>
        <begin position="1"/>
        <end position="402"/>
    </location>
</feature>
<feature type="active site" description="Proton donor/acceptor" evidence="1">
    <location>
        <position position="148"/>
    </location>
</feature>
<feature type="binding site" evidence="1">
    <location>
        <position position="10"/>
    </location>
    <ligand>
        <name>Mg(2+)</name>
        <dbReference type="ChEBI" id="CHEBI:18420"/>
    </ligand>
</feature>
<feature type="binding site" evidence="1">
    <location>
        <position position="17"/>
    </location>
    <ligand>
        <name>ATP</name>
        <dbReference type="ChEBI" id="CHEBI:30616"/>
    </ligand>
</feature>
<feature type="binding site" evidence="1">
    <location>
        <position position="89"/>
    </location>
    <ligand>
        <name>substrate</name>
    </ligand>
</feature>
<feature type="binding site" evidence="1">
    <location>
        <begin position="208"/>
        <end position="212"/>
    </location>
    <ligand>
        <name>ATP</name>
        <dbReference type="ChEBI" id="CHEBI:30616"/>
    </ligand>
</feature>
<feature type="binding site" evidence="1">
    <location>
        <begin position="283"/>
        <end position="285"/>
    </location>
    <ligand>
        <name>ATP</name>
        <dbReference type="ChEBI" id="CHEBI:30616"/>
    </ligand>
</feature>
<feature type="binding site" evidence="1">
    <location>
        <begin position="334"/>
        <end position="338"/>
    </location>
    <ligand>
        <name>ATP</name>
        <dbReference type="ChEBI" id="CHEBI:30616"/>
    </ligand>
</feature>
<feature type="binding site" evidence="1">
    <location>
        <position position="389"/>
    </location>
    <ligand>
        <name>Mg(2+)</name>
        <dbReference type="ChEBI" id="CHEBI:18420"/>
    </ligand>
</feature>
<feature type="site" description="Transition state stabilizer" evidence="1">
    <location>
        <position position="180"/>
    </location>
</feature>
<feature type="site" description="Transition state stabilizer" evidence="1">
    <location>
        <position position="241"/>
    </location>
</feature>
<reference key="1">
    <citation type="journal article" date="2008" name="PLoS ONE">
        <title>Genome biology of Actinobacillus pleuropneumoniae JL03, an isolate of serotype 3 prevalent in China.</title>
        <authorList>
            <person name="Xu Z."/>
            <person name="Zhou Y."/>
            <person name="Li L."/>
            <person name="Zhou R."/>
            <person name="Xiao S."/>
            <person name="Wan Y."/>
            <person name="Zhang S."/>
            <person name="Wang K."/>
            <person name="Li W."/>
            <person name="Li L."/>
            <person name="Jin H."/>
            <person name="Kang M."/>
            <person name="Dalai B."/>
            <person name="Li T."/>
            <person name="Liu L."/>
            <person name="Cheng Y."/>
            <person name="Zhang L."/>
            <person name="Xu T."/>
            <person name="Zheng H."/>
            <person name="Pu S."/>
            <person name="Wang B."/>
            <person name="Gu W."/>
            <person name="Zhang X.L."/>
            <person name="Zhu G.-F."/>
            <person name="Wang S."/>
            <person name="Zhao G.-P."/>
            <person name="Chen H."/>
        </authorList>
    </citation>
    <scope>NUCLEOTIDE SEQUENCE [LARGE SCALE GENOMIC DNA]</scope>
    <source>
        <strain>JL03</strain>
    </source>
</reference>
<protein>
    <recommendedName>
        <fullName evidence="1">Acetate kinase</fullName>
        <ecNumber evidence="1">2.7.2.1</ecNumber>
    </recommendedName>
    <alternativeName>
        <fullName evidence="1">Acetokinase</fullName>
    </alternativeName>
</protein>
<name>ACKA_ACTPJ</name>
<organism>
    <name type="scientific">Actinobacillus pleuropneumoniae serotype 3 (strain JL03)</name>
    <dbReference type="NCBI Taxonomy" id="434271"/>
    <lineage>
        <taxon>Bacteria</taxon>
        <taxon>Pseudomonadati</taxon>
        <taxon>Pseudomonadota</taxon>
        <taxon>Gammaproteobacteria</taxon>
        <taxon>Pasteurellales</taxon>
        <taxon>Pasteurellaceae</taxon>
        <taxon>Actinobacillus</taxon>
    </lineage>
</organism>
<accession>B0BNS1</accession>
<comment type="function">
    <text evidence="1">Catalyzes the formation of acetyl phosphate from acetate and ATP. Can also catalyze the reverse reaction.</text>
</comment>
<comment type="catalytic activity">
    <reaction evidence="1">
        <text>acetate + ATP = acetyl phosphate + ADP</text>
        <dbReference type="Rhea" id="RHEA:11352"/>
        <dbReference type="ChEBI" id="CHEBI:22191"/>
        <dbReference type="ChEBI" id="CHEBI:30089"/>
        <dbReference type="ChEBI" id="CHEBI:30616"/>
        <dbReference type="ChEBI" id="CHEBI:456216"/>
        <dbReference type="EC" id="2.7.2.1"/>
    </reaction>
</comment>
<comment type="cofactor">
    <cofactor evidence="1">
        <name>Mg(2+)</name>
        <dbReference type="ChEBI" id="CHEBI:18420"/>
    </cofactor>
    <cofactor evidence="1">
        <name>Mn(2+)</name>
        <dbReference type="ChEBI" id="CHEBI:29035"/>
    </cofactor>
    <text evidence="1">Mg(2+). Can also accept Mn(2+).</text>
</comment>
<comment type="pathway">
    <text evidence="1">Metabolic intermediate biosynthesis; acetyl-CoA biosynthesis; acetyl-CoA from acetate: step 1/2.</text>
</comment>
<comment type="subunit">
    <text evidence="1">Homodimer.</text>
</comment>
<comment type="subcellular location">
    <subcellularLocation>
        <location evidence="1">Cytoplasm</location>
    </subcellularLocation>
</comment>
<comment type="similarity">
    <text evidence="1">Belongs to the acetokinase family.</text>
</comment>
<evidence type="ECO:0000255" key="1">
    <source>
        <dbReference type="HAMAP-Rule" id="MF_00020"/>
    </source>
</evidence>
<keyword id="KW-0067">ATP-binding</keyword>
<keyword id="KW-0963">Cytoplasm</keyword>
<keyword id="KW-0418">Kinase</keyword>
<keyword id="KW-0460">Magnesium</keyword>
<keyword id="KW-0479">Metal-binding</keyword>
<keyword id="KW-0547">Nucleotide-binding</keyword>
<keyword id="KW-0808">Transferase</keyword>
<proteinExistence type="inferred from homology"/>